<reference key="1">
    <citation type="journal article" date="1993" name="Plant Mol. Biol.">
        <title>Differential expression of tomato (Lycopersicon esculentum L.) genes encoding shikimate pathway isoenzymes. II. Chorismate synthase.</title>
        <authorList>
            <person name="Goerlach J."/>
            <person name="Schmid J."/>
            <person name="Amrheim N."/>
        </authorList>
    </citation>
    <scope>NUCLEOTIDE SEQUENCE [MRNA]</scope>
    <source>
        <strain>cv. UC82B</strain>
    </source>
</reference>
<keyword id="KW-0028">Amino-acid biosynthesis</keyword>
<keyword id="KW-0057">Aromatic amino acid biosynthesis</keyword>
<keyword id="KW-0150">Chloroplast</keyword>
<keyword id="KW-0456">Lyase</keyword>
<keyword id="KW-0934">Plastid</keyword>
<keyword id="KW-1185">Reference proteome</keyword>
<keyword id="KW-0809">Transit peptide</keyword>
<protein>
    <recommendedName>
        <fullName>Chorismate synthase 2, chloroplastic</fullName>
        <ecNumber>4.2.3.5</ecNumber>
    </recommendedName>
    <alternativeName>
        <fullName>5-enolpyruvylshikimate-3-phosphate phospholyase 2</fullName>
    </alternativeName>
</protein>
<organism>
    <name type="scientific">Solanum lycopersicum</name>
    <name type="common">Tomato</name>
    <name type="synonym">Lycopersicon esculentum</name>
    <dbReference type="NCBI Taxonomy" id="4081"/>
    <lineage>
        <taxon>Eukaryota</taxon>
        <taxon>Viridiplantae</taxon>
        <taxon>Streptophyta</taxon>
        <taxon>Embryophyta</taxon>
        <taxon>Tracheophyta</taxon>
        <taxon>Spermatophyta</taxon>
        <taxon>Magnoliopsida</taxon>
        <taxon>eudicotyledons</taxon>
        <taxon>Gunneridae</taxon>
        <taxon>Pentapetalae</taxon>
        <taxon>asterids</taxon>
        <taxon>lamiids</taxon>
        <taxon>Solanales</taxon>
        <taxon>Solanaceae</taxon>
        <taxon>Solanoideae</taxon>
        <taxon>Solaneae</taxon>
        <taxon>Solanum</taxon>
        <taxon>Solanum subgen. Lycopersicon</taxon>
    </lineage>
</organism>
<sequence length="431" mass="46871">MASSMLTKQFLGAPFSSFGSGQQPSKLCSSNLRFPTHRSQPKRLEIQAAGNTFGNYFRVTTFGESHGGGVGCIIDGCPPRLPLSESDMQVELDRRRPGQSRITTPRKETDTCKISSGTADGLTTGSPIKVEVPNTDQRGNDYSEMSLAYRPSHADATYDFKYGVRSVQGGGRSSARETIGRVAAGAVAKKILKLYSGTEILAYVSQVHNVVLPEDLVDNQIVTLEQIESNIVRCPNPEYAEKMIGAIDYVRVRGDSVGGVVTCIVRNVPRGLGTPVFDKLEAELAKACMSLPATKGFEFGSGFAGTFMTGSEHNDEFFMDEHDQIRTKTNRSGGIQGGISNGEIINMRVAFKPTSTIARKQHTVSRDKHETELIARGRHDPCVVPRAVPMVEAMVALVLVDQLMTQYAQCMLFPVNLTLQEPLQPSTTKSA</sequence>
<accession>Q42885</accession>
<name>AROC2_SOLLC</name>
<feature type="transit peptide" description="Chloroplast" evidence="2">
    <location>
        <begin position="1"/>
        <end position="48"/>
    </location>
</feature>
<feature type="chain" id="PRO_0000002297" description="Chorismate synthase 2, chloroplastic">
    <location>
        <begin position="49"/>
        <end position="431"/>
    </location>
</feature>
<feature type="region of interest" description="Disordered" evidence="3">
    <location>
        <begin position="93"/>
        <end position="141"/>
    </location>
</feature>
<feature type="compositionally biased region" description="Polar residues" evidence="3">
    <location>
        <begin position="112"/>
        <end position="126"/>
    </location>
</feature>
<comment type="function">
    <text>Catalyzes the last common step of the biosynthesis of aromatic amino acids, produced via the shikimic acid pathway.</text>
</comment>
<comment type="catalytic activity">
    <reaction>
        <text>5-O-(1-carboxyvinyl)-3-phosphoshikimate = chorismate + phosphate</text>
        <dbReference type="Rhea" id="RHEA:21020"/>
        <dbReference type="ChEBI" id="CHEBI:29748"/>
        <dbReference type="ChEBI" id="CHEBI:43474"/>
        <dbReference type="ChEBI" id="CHEBI:57701"/>
        <dbReference type="EC" id="4.2.3.5"/>
    </reaction>
</comment>
<comment type="cofactor">
    <cofactor>
        <name>FMNH2</name>
        <dbReference type="ChEBI" id="CHEBI:57618"/>
    </cofactor>
</comment>
<comment type="pathway">
    <text>Metabolic intermediate biosynthesis; chorismate biosynthesis; chorismate from D-erythrose 4-phosphate and phosphoenolpyruvate: step 7/7.</text>
</comment>
<comment type="subunit">
    <text evidence="1">Homotetramer.</text>
</comment>
<comment type="subcellular location">
    <subcellularLocation>
        <location>Plastid</location>
        <location>Chloroplast</location>
    </subcellularLocation>
</comment>
<comment type="tissue specificity">
    <text>Predominantly expressed in flowers and roots and, to a lesser extent, in stems, leaves, and cotyledons.</text>
</comment>
<comment type="similarity">
    <text evidence="4">Belongs to the chorismate synthase family.</text>
</comment>
<proteinExistence type="evidence at transcript level"/>
<gene>
    <name type="primary">CS2</name>
</gene>
<evidence type="ECO:0000250" key="1"/>
<evidence type="ECO:0000255" key="2"/>
<evidence type="ECO:0000256" key="3">
    <source>
        <dbReference type="SAM" id="MobiDB-lite"/>
    </source>
</evidence>
<evidence type="ECO:0000305" key="4"/>
<dbReference type="EC" id="4.2.3.5"/>
<dbReference type="EMBL" id="Z21791">
    <property type="protein sequence ID" value="CAA79854.1"/>
    <property type="molecule type" value="mRNA"/>
</dbReference>
<dbReference type="PIR" id="S40409">
    <property type="entry name" value="S40409"/>
</dbReference>
<dbReference type="RefSeq" id="NP_001234411.1">
    <property type="nucleotide sequence ID" value="NM_001247482.1"/>
</dbReference>
<dbReference type="SMR" id="Q42885"/>
<dbReference type="FunCoup" id="Q42885">
    <property type="interactions" value="1106"/>
</dbReference>
<dbReference type="STRING" id="4081.Q42885"/>
<dbReference type="PaxDb" id="4081-Solyc04g009620.2.1"/>
<dbReference type="EnsemblPlants" id="Solyc04g009620.3.1">
    <property type="protein sequence ID" value="Solyc04g009620.3.1"/>
    <property type="gene ID" value="Solyc04g009620.3"/>
</dbReference>
<dbReference type="GeneID" id="544151"/>
<dbReference type="Gramene" id="Solyc04g009620.3.1">
    <property type="protein sequence ID" value="Solyc04g009620.3.1"/>
    <property type="gene ID" value="Solyc04g009620.3"/>
</dbReference>
<dbReference type="KEGG" id="sly:544151"/>
<dbReference type="eggNOG" id="KOG4492">
    <property type="taxonomic scope" value="Eukaryota"/>
</dbReference>
<dbReference type="HOGENOM" id="CLU_034547_0_1_1"/>
<dbReference type="InParanoid" id="Q42885"/>
<dbReference type="OMA" id="ASYASFM"/>
<dbReference type="OrthoDB" id="1721239at2759"/>
<dbReference type="PhylomeDB" id="Q42885"/>
<dbReference type="UniPathway" id="UPA00053">
    <property type="reaction ID" value="UER00090"/>
</dbReference>
<dbReference type="Proteomes" id="UP000004994">
    <property type="component" value="Chromosome 4"/>
</dbReference>
<dbReference type="GO" id="GO:0009507">
    <property type="term" value="C:chloroplast"/>
    <property type="evidence" value="ECO:0007669"/>
    <property type="project" value="UniProtKB-SubCell"/>
</dbReference>
<dbReference type="GO" id="GO:0005829">
    <property type="term" value="C:cytosol"/>
    <property type="evidence" value="ECO:0000318"/>
    <property type="project" value="GO_Central"/>
</dbReference>
<dbReference type="GO" id="GO:0004107">
    <property type="term" value="F:chorismate synthase activity"/>
    <property type="evidence" value="ECO:0000318"/>
    <property type="project" value="GO_Central"/>
</dbReference>
<dbReference type="GO" id="GO:0010181">
    <property type="term" value="F:FMN binding"/>
    <property type="evidence" value="ECO:0000318"/>
    <property type="project" value="GO_Central"/>
</dbReference>
<dbReference type="GO" id="GO:0008652">
    <property type="term" value="P:amino acid biosynthetic process"/>
    <property type="evidence" value="ECO:0007669"/>
    <property type="project" value="UniProtKB-KW"/>
</dbReference>
<dbReference type="GO" id="GO:0009073">
    <property type="term" value="P:aromatic amino acid family biosynthetic process"/>
    <property type="evidence" value="ECO:0000318"/>
    <property type="project" value="GO_Central"/>
</dbReference>
<dbReference type="GO" id="GO:0009423">
    <property type="term" value="P:chorismate biosynthetic process"/>
    <property type="evidence" value="ECO:0000318"/>
    <property type="project" value="GO_Central"/>
</dbReference>
<dbReference type="CDD" id="cd07304">
    <property type="entry name" value="Chorismate_synthase"/>
    <property type="match status" value="1"/>
</dbReference>
<dbReference type="FunFam" id="3.60.150.10:FF:000003">
    <property type="entry name" value="Chorismate synthase"/>
    <property type="match status" value="1"/>
</dbReference>
<dbReference type="Gene3D" id="3.60.150.10">
    <property type="entry name" value="Chorismate synthase AroC"/>
    <property type="match status" value="1"/>
</dbReference>
<dbReference type="HAMAP" id="MF_00300">
    <property type="entry name" value="Chorismate_synth"/>
    <property type="match status" value="1"/>
</dbReference>
<dbReference type="InterPro" id="IPR000453">
    <property type="entry name" value="Chorismate_synth"/>
</dbReference>
<dbReference type="InterPro" id="IPR035904">
    <property type="entry name" value="Chorismate_synth_AroC_sf"/>
</dbReference>
<dbReference type="InterPro" id="IPR020541">
    <property type="entry name" value="Chorismate_synthase_CS"/>
</dbReference>
<dbReference type="NCBIfam" id="TIGR00033">
    <property type="entry name" value="aroC"/>
    <property type="match status" value="1"/>
</dbReference>
<dbReference type="NCBIfam" id="NF003793">
    <property type="entry name" value="PRK05382.1"/>
    <property type="match status" value="1"/>
</dbReference>
<dbReference type="PANTHER" id="PTHR21085">
    <property type="entry name" value="CHORISMATE SYNTHASE"/>
    <property type="match status" value="1"/>
</dbReference>
<dbReference type="PANTHER" id="PTHR21085:SF0">
    <property type="entry name" value="CHORISMATE SYNTHASE"/>
    <property type="match status" value="1"/>
</dbReference>
<dbReference type="Pfam" id="PF01264">
    <property type="entry name" value="Chorismate_synt"/>
    <property type="match status" value="1"/>
</dbReference>
<dbReference type="PIRSF" id="PIRSF001456">
    <property type="entry name" value="Chorismate_synth"/>
    <property type="match status" value="1"/>
</dbReference>
<dbReference type="SUPFAM" id="SSF103263">
    <property type="entry name" value="Chorismate synthase, AroC"/>
    <property type="match status" value="1"/>
</dbReference>
<dbReference type="PROSITE" id="PS00787">
    <property type="entry name" value="CHORISMATE_SYNTHASE_1"/>
    <property type="match status" value="1"/>
</dbReference>
<dbReference type="PROSITE" id="PS00788">
    <property type="entry name" value="CHORISMATE_SYNTHASE_2"/>
    <property type="match status" value="1"/>
</dbReference>
<dbReference type="PROSITE" id="PS00789">
    <property type="entry name" value="CHORISMATE_SYNTHASE_3"/>
    <property type="match status" value="1"/>
</dbReference>